<name>RL18_EDWI9</name>
<comment type="function">
    <text evidence="1">This is one of the proteins that bind and probably mediate the attachment of the 5S RNA into the large ribosomal subunit, where it forms part of the central protuberance.</text>
</comment>
<comment type="subunit">
    <text evidence="1">Part of the 50S ribosomal subunit; part of the 5S rRNA/L5/L18/L25 subcomplex. Contacts the 5S and 23S rRNAs.</text>
</comment>
<comment type="similarity">
    <text evidence="1">Belongs to the universal ribosomal protein uL18 family.</text>
</comment>
<proteinExistence type="inferred from homology"/>
<reference key="1">
    <citation type="submission" date="2009-03" db="EMBL/GenBank/DDBJ databases">
        <title>Complete genome sequence of Edwardsiella ictaluri 93-146.</title>
        <authorList>
            <person name="Williams M.L."/>
            <person name="Gillaspy A.F."/>
            <person name="Dyer D.W."/>
            <person name="Thune R.L."/>
            <person name="Waldbieser G.C."/>
            <person name="Schuster S.C."/>
            <person name="Gipson J."/>
            <person name="Zaitshik J."/>
            <person name="Landry C."/>
            <person name="Lawrence M.L."/>
        </authorList>
    </citation>
    <scope>NUCLEOTIDE SEQUENCE [LARGE SCALE GENOMIC DNA]</scope>
    <source>
        <strain>93-146</strain>
    </source>
</reference>
<sequence length="117" mass="12800">MDKKSARIRRATRARRKLKELGATRLVVHRTPRHIYAQVIAPNGSEVLVAASTVEKAISEQLKYTGNKEAAAAVGKAIAERALEKGVKDVSFDRSGFQYHGRVQALADAAREAGLQF</sequence>
<evidence type="ECO:0000255" key="1">
    <source>
        <dbReference type="HAMAP-Rule" id="MF_01337"/>
    </source>
</evidence>
<evidence type="ECO:0000305" key="2"/>
<organism>
    <name type="scientific">Edwardsiella ictaluri (strain 93-146)</name>
    <dbReference type="NCBI Taxonomy" id="634503"/>
    <lineage>
        <taxon>Bacteria</taxon>
        <taxon>Pseudomonadati</taxon>
        <taxon>Pseudomonadota</taxon>
        <taxon>Gammaproteobacteria</taxon>
        <taxon>Enterobacterales</taxon>
        <taxon>Hafniaceae</taxon>
        <taxon>Edwardsiella</taxon>
    </lineage>
</organism>
<feature type="chain" id="PRO_1000214670" description="Large ribosomal subunit protein uL18">
    <location>
        <begin position="1"/>
        <end position="117"/>
    </location>
</feature>
<accession>C5BGK9</accession>
<gene>
    <name evidence="1" type="primary">rplR</name>
    <name type="ordered locus">NT01EI_3578</name>
</gene>
<dbReference type="EMBL" id="CP001600">
    <property type="protein sequence ID" value="ACR70706.1"/>
    <property type="molecule type" value="Genomic_DNA"/>
</dbReference>
<dbReference type="RefSeq" id="WP_012850020.1">
    <property type="nucleotide sequence ID" value="NZ_CP169062.1"/>
</dbReference>
<dbReference type="SMR" id="C5BGK9"/>
<dbReference type="STRING" id="67780.B6E78_09490"/>
<dbReference type="GeneID" id="72529985"/>
<dbReference type="KEGG" id="eic:NT01EI_3578"/>
<dbReference type="HOGENOM" id="CLU_098841_0_1_6"/>
<dbReference type="OrthoDB" id="9810939at2"/>
<dbReference type="Proteomes" id="UP000001485">
    <property type="component" value="Chromosome"/>
</dbReference>
<dbReference type="GO" id="GO:0022625">
    <property type="term" value="C:cytosolic large ribosomal subunit"/>
    <property type="evidence" value="ECO:0007669"/>
    <property type="project" value="TreeGrafter"/>
</dbReference>
<dbReference type="GO" id="GO:0008097">
    <property type="term" value="F:5S rRNA binding"/>
    <property type="evidence" value="ECO:0007669"/>
    <property type="project" value="TreeGrafter"/>
</dbReference>
<dbReference type="GO" id="GO:0003735">
    <property type="term" value="F:structural constituent of ribosome"/>
    <property type="evidence" value="ECO:0007669"/>
    <property type="project" value="InterPro"/>
</dbReference>
<dbReference type="GO" id="GO:0006412">
    <property type="term" value="P:translation"/>
    <property type="evidence" value="ECO:0007669"/>
    <property type="project" value="UniProtKB-UniRule"/>
</dbReference>
<dbReference type="CDD" id="cd00432">
    <property type="entry name" value="Ribosomal_L18_L5e"/>
    <property type="match status" value="1"/>
</dbReference>
<dbReference type="FunFam" id="3.30.420.100:FF:000001">
    <property type="entry name" value="50S ribosomal protein L18"/>
    <property type="match status" value="1"/>
</dbReference>
<dbReference type="Gene3D" id="3.30.420.100">
    <property type="match status" value="1"/>
</dbReference>
<dbReference type="HAMAP" id="MF_01337_B">
    <property type="entry name" value="Ribosomal_uL18_B"/>
    <property type="match status" value="1"/>
</dbReference>
<dbReference type="InterPro" id="IPR004389">
    <property type="entry name" value="Ribosomal_uL18_bac-type"/>
</dbReference>
<dbReference type="InterPro" id="IPR005484">
    <property type="entry name" value="Ribosomal_uL18_bac/euk"/>
</dbReference>
<dbReference type="NCBIfam" id="TIGR00060">
    <property type="entry name" value="L18_bact"/>
    <property type="match status" value="1"/>
</dbReference>
<dbReference type="PANTHER" id="PTHR12899">
    <property type="entry name" value="39S RIBOSOMAL PROTEIN L18, MITOCHONDRIAL"/>
    <property type="match status" value="1"/>
</dbReference>
<dbReference type="PANTHER" id="PTHR12899:SF3">
    <property type="entry name" value="LARGE RIBOSOMAL SUBUNIT PROTEIN UL18M"/>
    <property type="match status" value="1"/>
</dbReference>
<dbReference type="Pfam" id="PF00861">
    <property type="entry name" value="Ribosomal_L18p"/>
    <property type="match status" value="1"/>
</dbReference>
<dbReference type="SUPFAM" id="SSF53137">
    <property type="entry name" value="Translational machinery components"/>
    <property type="match status" value="1"/>
</dbReference>
<protein>
    <recommendedName>
        <fullName evidence="1">Large ribosomal subunit protein uL18</fullName>
    </recommendedName>
    <alternativeName>
        <fullName evidence="2">50S ribosomal protein L18</fullName>
    </alternativeName>
</protein>
<keyword id="KW-0687">Ribonucleoprotein</keyword>
<keyword id="KW-0689">Ribosomal protein</keyword>
<keyword id="KW-0694">RNA-binding</keyword>
<keyword id="KW-0699">rRNA-binding</keyword>